<reference key="1">
    <citation type="journal article" date="2007" name="Genome Biol.">
        <title>Comparison of Francisella tularensis genomes reveals evolutionary events associated with the emergence of human pathogenic strains.</title>
        <authorList>
            <person name="Rohmer L."/>
            <person name="Fong C."/>
            <person name="Abmayr S."/>
            <person name="Wasnick M."/>
            <person name="Larson Freeman T.J."/>
            <person name="Radey M."/>
            <person name="Guina T."/>
            <person name="Svensson K."/>
            <person name="Hayden H.S."/>
            <person name="Jacobs M."/>
            <person name="Gallagher L.A."/>
            <person name="Manoil C."/>
            <person name="Ernst R.K."/>
            <person name="Drees B."/>
            <person name="Buckley D."/>
            <person name="Haugen E."/>
            <person name="Bovee D."/>
            <person name="Zhou Y."/>
            <person name="Chang J."/>
            <person name="Levy R."/>
            <person name="Lim R."/>
            <person name="Gillett W."/>
            <person name="Guenthener D."/>
            <person name="Kang A."/>
            <person name="Shaffer S.A."/>
            <person name="Taylor G."/>
            <person name="Chen J."/>
            <person name="Gallis B."/>
            <person name="D'Argenio D.A."/>
            <person name="Forsman M."/>
            <person name="Olson M.V."/>
            <person name="Goodlett D.R."/>
            <person name="Kaul R."/>
            <person name="Miller S.I."/>
            <person name="Brittnacher M.J."/>
        </authorList>
    </citation>
    <scope>NUCLEOTIDE SEQUENCE [LARGE SCALE GENOMIC DNA]</scope>
    <source>
        <strain>U112</strain>
    </source>
</reference>
<proteinExistence type="inferred from homology"/>
<protein>
    <recommendedName>
        <fullName evidence="1">Crossover junction endodeoxyribonuclease RuvC</fullName>
        <ecNumber evidence="1">3.1.21.10</ecNumber>
    </recommendedName>
    <alternativeName>
        <fullName evidence="1">Holliday junction nuclease RuvC</fullName>
    </alternativeName>
    <alternativeName>
        <fullName evidence="1">Holliday junction resolvase RuvC</fullName>
    </alternativeName>
</protein>
<comment type="function">
    <text evidence="1">The RuvA-RuvB-RuvC complex processes Holliday junction (HJ) DNA during genetic recombination and DNA repair. Endonuclease that resolves HJ intermediates. Cleaves cruciform DNA by making single-stranded nicks across the HJ at symmetrical positions within the homologous arms, yielding a 5'-phosphate and a 3'-hydroxyl group; requires a central core of homology in the junction. The consensus cleavage sequence is 5'-(A/T)TT(C/G)-3'. Cleavage occurs on the 3'-side of the TT dinucleotide at the point of strand exchange. HJ branch migration catalyzed by RuvA-RuvB allows RuvC to scan DNA until it finds its consensus sequence, where it cleaves and resolves the cruciform DNA.</text>
</comment>
<comment type="catalytic activity">
    <reaction evidence="1">
        <text>Endonucleolytic cleavage at a junction such as a reciprocal single-stranded crossover between two homologous DNA duplexes (Holliday junction).</text>
        <dbReference type="EC" id="3.1.21.10"/>
    </reaction>
</comment>
<comment type="cofactor">
    <cofactor evidence="1">
        <name>Mg(2+)</name>
        <dbReference type="ChEBI" id="CHEBI:18420"/>
    </cofactor>
    <text evidence="1">Binds 2 Mg(2+) ion per subunit.</text>
</comment>
<comment type="subunit">
    <text evidence="1">Homodimer which binds Holliday junction (HJ) DNA. The HJ becomes 2-fold symmetrical on binding to RuvC with unstacked arms; it has a different conformation from HJ DNA in complex with RuvA. In the full resolvosome a probable DNA-RuvA(4)-RuvB(12)-RuvC(2) complex forms which resolves the HJ.</text>
</comment>
<comment type="subcellular location">
    <subcellularLocation>
        <location evidence="1">Cytoplasm</location>
    </subcellularLocation>
</comment>
<comment type="similarity">
    <text evidence="1">Belongs to the RuvC family.</text>
</comment>
<evidence type="ECO:0000255" key="1">
    <source>
        <dbReference type="HAMAP-Rule" id="MF_00034"/>
    </source>
</evidence>
<organism>
    <name type="scientific">Francisella tularensis subsp. novicida (strain U112)</name>
    <dbReference type="NCBI Taxonomy" id="401614"/>
    <lineage>
        <taxon>Bacteria</taxon>
        <taxon>Pseudomonadati</taxon>
        <taxon>Pseudomonadota</taxon>
        <taxon>Gammaproteobacteria</taxon>
        <taxon>Thiotrichales</taxon>
        <taxon>Francisellaceae</taxon>
        <taxon>Francisella</taxon>
    </lineage>
</organism>
<keyword id="KW-0963">Cytoplasm</keyword>
<keyword id="KW-0227">DNA damage</keyword>
<keyword id="KW-0233">DNA recombination</keyword>
<keyword id="KW-0234">DNA repair</keyword>
<keyword id="KW-0238">DNA-binding</keyword>
<keyword id="KW-0255">Endonuclease</keyword>
<keyword id="KW-0378">Hydrolase</keyword>
<keyword id="KW-0460">Magnesium</keyword>
<keyword id="KW-0479">Metal-binding</keyword>
<keyword id="KW-0540">Nuclease</keyword>
<name>RUVC_FRATN</name>
<accession>A0Q6P9</accession>
<feature type="chain" id="PRO_1000002757" description="Crossover junction endodeoxyribonuclease RuvC">
    <location>
        <begin position="1"/>
        <end position="171"/>
    </location>
</feature>
<feature type="active site" evidence="1">
    <location>
        <position position="7"/>
    </location>
</feature>
<feature type="active site" evidence="1">
    <location>
        <position position="66"/>
    </location>
</feature>
<feature type="active site" evidence="1">
    <location>
        <position position="138"/>
    </location>
</feature>
<feature type="binding site" evidence="1">
    <location>
        <position position="7"/>
    </location>
    <ligand>
        <name>Mg(2+)</name>
        <dbReference type="ChEBI" id="CHEBI:18420"/>
        <label>1</label>
    </ligand>
</feature>
<feature type="binding site" evidence="1">
    <location>
        <position position="66"/>
    </location>
    <ligand>
        <name>Mg(2+)</name>
        <dbReference type="ChEBI" id="CHEBI:18420"/>
        <label>2</label>
    </ligand>
</feature>
<feature type="binding site" evidence="1">
    <location>
        <position position="138"/>
    </location>
    <ligand>
        <name>Mg(2+)</name>
        <dbReference type="ChEBI" id="CHEBI:18420"/>
        <label>1</label>
    </ligand>
</feature>
<gene>
    <name evidence="1" type="primary">ruvC</name>
    <name type="ordered locus">FTN_1027</name>
</gene>
<dbReference type="EC" id="3.1.21.10" evidence="1"/>
<dbReference type="EMBL" id="CP000439">
    <property type="protein sequence ID" value="ABK89914.1"/>
    <property type="molecule type" value="Genomic_DNA"/>
</dbReference>
<dbReference type="RefSeq" id="WP_003026245.1">
    <property type="nucleotide sequence ID" value="NZ_CP009633.1"/>
</dbReference>
<dbReference type="SMR" id="A0Q6P9"/>
<dbReference type="GeneID" id="75265238"/>
<dbReference type="KEGG" id="ftn:FTN_1027"/>
<dbReference type="KEGG" id="ftx:AW25_981"/>
<dbReference type="BioCyc" id="FTUL401614:G1G75-1070-MONOMER"/>
<dbReference type="Proteomes" id="UP000000762">
    <property type="component" value="Chromosome"/>
</dbReference>
<dbReference type="GO" id="GO:0005737">
    <property type="term" value="C:cytoplasm"/>
    <property type="evidence" value="ECO:0007669"/>
    <property type="project" value="UniProtKB-SubCell"/>
</dbReference>
<dbReference type="GO" id="GO:0048476">
    <property type="term" value="C:Holliday junction resolvase complex"/>
    <property type="evidence" value="ECO:0007669"/>
    <property type="project" value="UniProtKB-UniRule"/>
</dbReference>
<dbReference type="GO" id="GO:0008821">
    <property type="term" value="F:crossover junction DNA endonuclease activity"/>
    <property type="evidence" value="ECO:0007669"/>
    <property type="project" value="UniProtKB-UniRule"/>
</dbReference>
<dbReference type="GO" id="GO:0003677">
    <property type="term" value="F:DNA binding"/>
    <property type="evidence" value="ECO:0007669"/>
    <property type="project" value="UniProtKB-KW"/>
</dbReference>
<dbReference type="GO" id="GO:0000287">
    <property type="term" value="F:magnesium ion binding"/>
    <property type="evidence" value="ECO:0007669"/>
    <property type="project" value="UniProtKB-UniRule"/>
</dbReference>
<dbReference type="GO" id="GO:0006310">
    <property type="term" value="P:DNA recombination"/>
    <property type="evidence" value="ECO:0007669"/>
    <property type="project" value="UniProtKB-UniRule"/>
</dbReference>
<dbReference type="GO" id="GO:0006281">
    <property type="term" value="P:DNA repair"/>
    <property type="evidence" value="ECO:0007669"/>
    <property type="project" value="UniProtKB-UniRule"/>
</dbReference>
<dbReference type="CDD" id="cd16962">
    <property type="entry name" value="RuvC"/>
    <property type="match status" value="1"/>
</dbReference>
<dbReference type="FunFam" id="3.30.420.10:FF:000002">
    <property type="entry name" value="Crossover junction endodeoxyribonuclease RuvC"/>
    <property type="match status" value="1"/>
</dbReference>
<dbReference type="Gene3D" id="3.30.420.10">
    <property type="entry name" value="Ribonuclease H-like superfamily/Ribonuclease H"/>
    <property type="match status" value="1"/>
</dbReference>
<dbReference type="HAMAP" id="MF_00034">
    <property type="entry name" value="RuvC"/>
    <property type="match status" value="1"/>
</dbReference>
<dbReference type="InterPro" id="IPR012337">
    <property type="entry name" value="RNaseH-like_sf"/>
</dbReference>
<dbReference type="InterPro" id="IPR036397">
    <property type="entry name" value="RNaseH_sf"/>
</dbReference>
<dbReference type="InterPro" id="IPR020563">
    <property type="entry name" value="X-over_junc_endoDNase_Mg_BS"/>
</dbReference>
<dbReference type="InterPro" id="IPR002176">
    <property type="entry name" value="X-over_junc_endoDNase_RuvC"/>
</dbReference>
<dbReference type="NCBIfam" id="NF000711">
    <property type="entry name" value="PRK00039.2-1"/>
    <property type="match status" value="1"/>
</dbReference>
<dbReference type="NCBIfam" id="TIGR00228">
    <property type="entry name" value="ruvC"/>
    <property type="match status" value="1"/>
</dbReference>
<dbReference type="PANTHER" id="PTHR30194">
    <property type="entry name" value="CROSSOVER JUNCTION ENDODEOXYRIBONUCLEASE RUVC"/>
    <property type="match status" value="1"/>
</dbReference>
<dbReference type="PANTHER" id="PTHR30194:SF3">
    <property type="entry name" value="CROSSOVER JUNCTION ENDODEOXYRIBONUCLEASE RUVC"/>
    <property type="match status" value="1"/>
</dbReference>
<dbReference type="Pfam" id="PF02075">
    <property type="entry name" value="RuvC"/>
    <property type="match status" value="1"/>
</dbReference>
<dbReference type="PRINTS" id="PR00696">
    <property type="entry name" value="RSOLVASERUVC"/>
</dbReference>
<dbReference type="SUPFAM" id="SSF53098">
    <property type="entry name" value="Ribonuclease H-like"/>
    <property type="match status" value="1"/>
</dbReference>
<dbReference type="PROSITE" id="PS01321">
    <property type="entry name" value="RUVC"/>
    <property type="match status" value="1"/>
</dbReference>
<sequence length="171" mass="18297">MVILGIDPGSRITGFGVIKVQDNKIYYVASGCIRITEITTPKRLKQIADGITQIINIYAPTEAAIEQIFMFQNPMGAIKLGQARGVAMCTLAINNLEVSEYSAKQIKQAVVGTGGAAKSQVQHMVQSLLGLSKKPPEDAADALAIAICHYHSSKSLAKISGASRVSQKRIK</sequence>